<accession>Q0C7E3</accession>
<name>VPS10_ASPTN</name>
<sequence>MIPRWLLLVSCLVLALIAQPGAAKKSSQPQWTLKEIDHKPNALFFFEDTETVLVNTRNGDLHRSFDGGNEWEIVEGEDGRMKHQVALLLQHPYDSHRAYALGIDGHHWITTDQAKTWREFTLDELPAMRNPPLVFHGQDPSKVIFQGEDCVGRFCIVRSYYTDDDFRTTEILRESVGGCSWALGHPQFAEDSDLAKEIQNRTLCVVPGLKVPLPYANRLVYSDGYFNSDKEGTEVKLQEGRPVAGVMRTAAIKKFLVAAARSRGTDELALYVTVDTKNWHRAEFGGHRLEEDAYTMLESTNYSLQVDVLTSPKSGMGVLFTSNSDGTYFTRNVEHTNRDMRGTVDFEKIANIQGIVMVNVVDNPKEVENGGKNKRVVSKISFDDGRTFQPLKVDDKKLHLHSVTSYANIGRVFSSPAPGLVMGVGNTGDHLKDYSEGDLYISDDAGVTWRHALEHSHKYEFGDQGAVVIAMRDDEKTNKLEYSIDHGKSWESVELDKKIYPIMVTTTPDSTSLKFLIVGSTSKHDGDGTYITYAVDFAGLHERKCEKDDFDEQWPARLDENGEPDCLMGHKQFFRRRKPNADCFIDEEFKDPQPIFKPCKCTAEDFECEYKRSEDGEGCELPPSLQPPEGKCKKPTDTFKGPSGWRLIPGNACEREGGKNLDEEIERSCEKVGVPTDGKIKQTKQFFDSEPVVYRYMERQSSNSGDDETVLVITRNVEFFISHDHGKTWEQPLKGEKVNRLVLHPYHNDVAFLLTEGKEGYYTIDRGYTFKPFKTPLPPTQQTYLPPLAFHPQYKDWLIWTGAADCSSTSGDCHDDAYFSKNRGESWELLLRYVRRCEFEASENRPDSENLIFCEQHESESKSNPLHLLSSENFFADSRDHYTDLVNYATMSEFIIAAFKDPENPDALVATTSVDGKTFAEARFPPNLHIPVKTAYTVLESTTHAIFLHVKAGSTAEYGPLIKSNSNGTSYVLSLDAVNENRAGFADFEKMKGLEGVAVVNVVGNVEEVSKGAKKKLKTMISHNDGAQWALLPPPEKDADGKAFGCSVTKGKGTPDCSLHLHGYTERKDERDTYSSGSAIGMMIAVGNVGDHLSDSEADTFITNDGGITWKSARKGRHMWEYGDAGSVIVLVPEDVPTDKLYYSVDEGDSWEEYRFSDVEMQIEDITTVPSDTSKNFLLWGREMKSDSGKKIATVNIDFSGLRSRQCKLDEDGHANDDYRLWEPKHPFQTDNCLFGHVEQYHRKKPDAACWNNWREPHVHSIGKNCSCTRADFECDYNFEPQSDGSCKLVPGLPLPDAEAICRADPDRIEYWEPSGYRRVPQSTCMGGDEFDHVKTKPCPHKEKEYEKKHGISGVGLFFAIVIPIAVAGGIGYYAYTRWDGKFGQIRLGEGTSGSHEWLSRDSLLVTVPIAIIAGVVAVGRALPLLAMSMWRSASGYVRLGGSRGYSRPYASRGSFAARRGDYSSVVEDEDELLGVEDLDEDDDEN</sequence>
<dbReference type="EMBL" id="CH476610">
    <property type="protein sequence ID" value="EAU29388.1"/>
    <property type="status" value="ALT_SEQ"/>
    <property type="molecule type" value="Genomic_DNA"/>
</dbReference>
<dbReference type="RefSeq" id="XP_001218739.1">
    <property type="nucleotide sequence ID" value="XM_001218738.1"/>
</dbReference>
<dbReference type="SMR" id="Q0C7E3"/>
<dbReference type="STRING" id="341663.Q0C7E3"/>
<dbReference type="GlyCosmos" id="Q0C7E3">
    <property type="glycosylation" value="4 sites, No reported glycans"/>
</dbReference>
<dbReference type="GeneID" id="4354654"/>
<dbReference type="eggNOG" id="KOG3511">
    <property type="taxonomic scope" value="Eukaryota"/>
</dbReference>
<dbReference type="OrthoDB" id="443634at2759"/>
<dbReference type="Proteomes" id="UP000007963">
    <property type="component" value="Unassembled WGS sequence"/>
</dbReference>
<dbReference type="GO" id="GO:0005829">
    <property type="term" value="C:cytosol"/>
    <property type="evidence" value="ECO:0007669"/>
    <property type="project" value="GOC"/>
</dbReference>
<dbReference type="GO" id="GO:0005794">
    <property type="term" value="C:Golgi apparatus"/>
    <property type="evidence" value="ECO:0007669"/>
    <property type="project" value="UniProtKB-SubCell"/>
</dbReference>
<dbReference type="GO" id="GO:0016020">
    <property type="term" value="C:membrane"/>
    <property type="evidence" value="ECO:0007669"/>
    <property type="project" value="UniProtKB-KW"/>
</dbReference>
<dbReference type="GO" id="GO:0006895">
    <property type="term" value="P:Golgi to endosome transport"/>
    <property type="evidence" value="ECO:0007669"/>
    <property type="project" value="TreeGrafter"/>
</dbReference>
<dbReference type="GO" id="GO:0006896">
    <property type="term" value="P:Golgi to vacuole transport"/>
    <property type="evidence" value="ECO:0007669"/>
    <property type="project" value="TreeGrafter"/>
</dbReference>
<dbReference type="GO" id="GO:0006623">
    <property type="term" value="P:protein targeting to vacuole"/>
    <property type="evidence" value="ECO:0007669"/>
    <property type="project" value="TreeGrafter"/>
</dbReference>
<dbReference type="CDD" id="cd15482">
    <property type="entry name" value="Sialidase_non-viral"/>
    <property type="match status" value="1"/>
</dbReference>
<dbReference type="FunFam" id="2.10.70.80:FF:000006">
    <property type="entry name" value="Sortilin"/>
    <property type="match status" value="1"/>
</dbReference>
<dbReference type="FunFam" id="2.130.10.10:FF:000676">
    <property type="entry name" value="Sortilin"/>
    <property type="match status" value="1"/>
</dbReference>
<dbReference type="FunFam" id="3.30.60.270:FF:000005">
    <property type="entry name" value="Sortilin"/>
    <property type="match status" value="2"/>
</dbReference>
<dbReference type="FunFam" id="2.10.70.80:FF:000001">
    <property type="entry name" value="Sortilin-related VPS10 domain-containing receptor 1"/>
    <property type="match status" value="1"/>
</dbReference>
<dbReference type="Gene3D" id="2.10.70.80">
    <property type="match status" value="2"/>
</dbReference>
<dbReference type="Gene3D" id="2.120.10.10">
    <property type="match status" value="1"/>
</dbReference>
<dbReference type="Gene3D" id="3.30.60.270">
    <property type="match status" value="2"/>
</dbReference>
<dbReference type="Gene3D" id="2.130.10.10">
    <property type="entry name" value="YVTN repeat-like/Quinoprotein amine dehydrogenase"/>
    <property type="match status" value="2"/>
</dbReference>
<dbReference type="InterPro" id="IPR036278">
    <property type="entry name" value="Sialidase_sf"/>
</dbReference>
<dbReference type="InterPro" id="IPR031777">
    <property type="entry name" value="Sortilin_C"/>
</dbReference>
<dbReference type="InterPro" id="IPR031778">
    <property type="entry name" value="Sortilin_N"/>
</dbReference>
<dbReference type="InterPro" id="IPR006581">
    <property type="entry name" value="VPS10"/>
</dbReference>
<dbReference type="InterPro" id="IPR050310">
    <property type="entry name" value="VPS10-sortilin"/>
</dbReference>
<dbReference type="InterPro" id="IPR015943">
    <property type="entry name" value="WD40/YVTN_repeat-like_dom_sf"/>
</dbReference>
<dbReference type="PANTHER" id="PTHR12106">
    <property type="entry name" value="SORTILIN RELATED"/>
    <property type="match status" value="1"/>
</dbReference>
<dbReference type="PANTHER" id="PTHR12106:SF27">
    <property type="entry name" value="SORTILIN-RELATED RECEPTOR"/>
    <property type="match status" value="1"/>
</dbReference>
<dbReference type="Pfam" id="PF15902">
    <property type="entry name" value="Sortilin-Vps10"/>
    <property type="match status" value="2"/>
</dbReference>
<dbReference type="Pfam" id="PF15901">
    <property type="entry name" value="Sortilin_C"/>
    <property type="match status" value="2"/>
</dbReference>
<dbReference type="SMART" id="SM00602">
    <property type="entry name" value="VPS10"/>
    <property type="match status" value="2"/>
</dbReference>
<dbReference type="SUPFAM" id="SSF110296">
    <property type="entry name" value="Oligoxyloglucan reducing end-specific cellobiohydrolase"/>
    <property type="match status" value="2"/>
</dbReference>
<dbReference type="SUPFAM" id="SSF50939">
    <property type="entry name" value="Sialidases"/>
    <property type="match status" value="1"/>
</dbReference>
<organism>
    <name type="scientific">Aspergillus terreus (strain NIH 2624 / FGSC A1156)</name>
    <dbReference type="NCBI Taxonomy" id="341663"/>
    <lineage>
        <taxon>Eukaryota</taxon>
        <taxon>Fungi</taxon>
        <taxon>Dikarya</taxon>
        <taxon>Ascomycota</taxon>
        <taxon>Pezizomycotina</taxon>
        <taxon>Eurotiomycetes</taxon>
        <taxon>Eurotiomycetidae</taxon>
        <taxon>Eurotiales</taxon>
        <taxon>Aspergillaceae</taxon>
        <taxon>Aspergillus</taxon>
        <taxon>Aspergillus subgen. Circumdati</taxon>
    </lineage>
</organism>
<feature type="signal peptide" evidence="2">
    <location>
        <begin position="1"/>
        <end position="23"/>
    </location>
</feature>
<feature type="chain" id="PRO_0000407508" description="Vacuolar protein sorting/targeting protein 10">
    <location>
        <begin position="24"/>
        <end position="1486"/>
    </location>
</feature>
<feature type="topological domain" description="Lumenal" evidence="2">
    <location>
        <begin position="24"/>
        <end position="1350"/>
    </location>
</feature>
<feature type="transmembrane region" description="Helical" evidence="2">
    <location>
        <begin position="1351"/>
        <end position="1371"/>
    </location>
</feature>
<feature type="topological domain" description="Cytoplasmic" evidence="2">
    <location>
        <begin position="1372"/>
        <end position="1407"/>
    </location>
</feature>
<feature type="transmembrane region" description="Helical" evidence="2">
    <location>
        <begin position="1408"/>
        <end position="1428"/>
    </location>
</feature>
<feature type="topological domain" description="Lumenal" evidence="2">
    <location>
        <begin position="1429"/>
        <end position="1486"/>
    </location>
</feature>
<feature type="repeat" description="BNR 1">
    <location>
        <begin position="63"/>
        <end position="72"/>
    </location>
</feature>
<feature type="repeat" description="BNR 2">
    <location>
        <begin position="380"/>
        <end position="389"/>
    </location>
</feature>
<feature type="repeat" description="BNR 3">
    <location>
        <begin position="440"/>
        <end position="450"/>
    </location>
</feature>
<feature type="repeat" description="BNR 4">
    <location>
        <begin position="482"/>
        <end position="491"/>
    </location>
</feature>
<feature type="repeat" description="BNR 5">
    <location>
        <begin position="720"/>
        <end position="730"/>
    </location>
</feature>
<feature type="repeat" description="BNR 6">
    <location>
        <begin position="761"/>
        <end position="771"/>
    </location>
</feature>
<feature type="repeat" description="BNR 7">
    <location>
        <begin position="818"/>
        <end position="828"/>
    </location>
</feature>
<feature type="repeat" description="BNR 8">
    <location>
        <begin position="1101"/>
        <end position="1111"/>
    </location>
</feature>
<feature type="repeat" description="BNR 9">
    <location>
        <begin position="1142"/>
        <end position="1152"/>
    </location>
</feature>
<feature type="glycosylation site" description="N-linked (GlcNAc...) asparagine" evidence="2">
    <location>
        <position position="200"/>
    </location>
</feature>
<feature type="glycosylation site" description="N-linked (GlcNAc...) asparagine" evidence="2">
    <location>
        <position position="301"/>
    </location>
</feature>
<feature type="glycosylation site" description="N-linked (GlcNAc...) asparagine" evidence="2">
    <location>
        <position position="967"/>
    </location>
</feature>
<feature type="glycosylation site" description="N-linked (GlcNAc...) asparagine" evidence="2">
    <location>
        <position position="1265"/>
    </location>
</feature>
<comment type="function">
    <text evidence="1">Functions as a sorting receptor in the Golgi compartment required for the intracellular sorting and delivery of soluble vacuolar proteins, like carboxypeptidase Y (CPY) and proteinase A. Executes multiple rounds of sorting by cycling between the late Golgi and a prevacuolar endosome-like compartment (By similarity).</text>
</comment>
<comment type="subcellular location">
    <subcellularLocation>
        <location evidence="1">Golgi apparatus</location>
        <location evidence="1">trans-Golgi network membrane</location>
        <topology evidence="1">Multi-pass membrane protein</topology>
    </subcellularLocation>
    <subcellularLocation>
        <location evidence="1">Prevacuolar compartment membrane</location>
        <topology evidence="1">Multi-pass membrane protein</topology>
    </subcellularLocation>
    <text evidence="1">Cycles between the Golgi apparatus and the prevacuolar compartment.</text>
</comment>
<comment type="similarity">
    <text evidence="3">Belongs to the VPS10-related sortilin family.</text>
</comment>
<comment type="sequence caution" evidence="3">
    <conflict type="erroneous gene model prediction">
        <sequence resource="EMBL-CDS" id="EAU29388"/>
    </conflict>
</comment>
<protein>
    <recommendedName>
        <fullName>Vacuolar protein sorting/targeting protein 10</fullName>
    </recommendedName>
    <alternativeName>
        <fullName>Carboxypeptidase Y receptor</fullName>
        <shortName>CPY receptor</shortName>
    </alternativeName>
    <alternativeName>
        <fullName>Sortilin vps10</fullName>
    </alternativeName>
    <alternativeName>
        <fullName>Vacuolar carboxypeptidase sorting receptor vps10</fullName>
    </alternativeName>
</protein>
<evidence type="ECO:0000250" key="1"/>
<evidence type="ECO:0000255" key="2"/>
<evidence type="ECO:0000305" key="3"/>
<keyword id="KW-0325">Glycoprotein</keyword>
<keyword id="KW-0333">Golgi apparatus</keyword>
<keyword id="KW-0472">Membrane</keyword>
<keyword id="KW-0653">Protein transport</keyword>
<keyword id="KW-0675">Receptor</keyword>
<keyword id="KW-1185">Reference proteome</keyword>
<keyword id="KW-0677">Repeat</keyword>
<keyword id="KW-0732">Signal</keyword>
<keyword id="KW-0812">Transmembrane</keyword>
<keyword id="KW-1133">Transmembrane helix</keyword>
<keyword id="KW-0813">Transport</keyword>
<gene>
    <name type="primary">vps10</name>
    <name type="ORF">ATEG_10391</name>
</gene>
<reference key="1">
    <citation type="submission" date="2005-09" db="EMBL/GenBank/DDBJ databases">
        <title>Annotation of the Aspergillus terreus NIH2624 genome.</title>
        <authorList>
            <person name="Birren B.W."/>
            <person name="Lander E.S."/>
            <person name="Galagan J.E."/>
            <person name="Nusbaum C."/>
            <person name="Devon K."/>
            <person name="Henn M."/>
            <person name="Ma L.-J."/>
            <person name="Jaffe D.B."/>
            <person name="Butler J."/>
            <person name="Alvarez P."/>
            <person name="Gnerre S."/>
            <person name="Grabherr M."/>
            <person name="Kleber M."/>
            <person name="Mauceli E.W."/>
            <person name="Brockman W."/>
            <person name="Rounsley S."/>
            <person name="Young S.K."/>
            <person name="LaButti K."/>
            <person name="Pushparaj V."/>
            <person name="DeCaprio D."/>
            <person name="Crawford M."/>
            <person name="Koehrsen M."/>
            <person name="Engels R."/>
            <person name="Montgomery P."/>
            <person name="Pearson M."/>
            <person name="Howarth C."/>
            <person name="Larson L."/>
            <person name="Luoma S."/>
            <person name="White J."/>
            <person name="Alvarado L."/>
            <person name="Kodira C.D."/>
            <person name="Zeng Q."/>
            <person name="Oleary S."/>
            <person name="Yandava C."/>
            <person name="Denning D.W."/>
            <person name="Nierman W.C."/>
            <person name="Milne T."/>
            <person name="Madden K."/>
        </authorList>
    </citation>
    <scope>NUCLEOTIDE SEQUENCE [LARGE SCALE GENOMIC DNA]</scope>
    <source>
        <strain>NIH 2624 / FGSC A1156</strain>
    </source>
</reference>
<proteinExistence type="inferred from homology"/>